<protein>
    <recommendedName>
        <fullName evidence="2">Small ribosomal subunit protein eS1</fullName>
    </recommendedName>
    <alternativeName>
        <fullName evidence="4">40S ribosomal protein S3a</fullName>
    </alternativeName>
    <alternativeName>
        <fullName>v-fos transformation effector protein</fullName>
    </alternativeName>
</protein>
<feature type="initiator methionine" description="Removed" evidence="2">
    <location>
        <position position="1"/>
    </location>
</feature>
<feature type="chain" id="PRO_0000153526" description="Small ribosomal subunit protein eS1">
    <location>
        <begin position="2"/>
        <end position="266"/>
    </location>
</feature>
<feature type="region of interest" description="Disordered" evidence="3">
    <location>
        <begin position="235"/>
        <end position="266"/>
    </location>
</feature>
<feature type="compositionally biased region" description="Basic and acidic residues" evidence="3">
    <location>
        <begin position="244"/>
        <end position="257"/>
    </location>
</feature>
<evidence type="ECO:0000250" key="1">
    <source>
        <dbReference type="UniProtKB" id="P49242"/>
    </source>
</evidence>
<evidence type="ECO:0000255" key="2">
    <source>
        <dbReference type="HAMAP-Rule" id="MF_03122"/>
    </source>
</evidence>
<evidence type="ECO:0000256" key="3">
    <source>
        <dbReference type="SAM" id="MobiDB-lite"/>
    </source>
</evidence>
<evidence type="ECO:0000305" key="4"/>
<dbReference type="EMBL" id="AF056328">
    <property type="protein sequence ID" value="AAD10201.1"/>
    <property type="molecule type" value="mRNA"/>
</dbReference>
<dbReference type="RefSeq" id="NP_001098311.1">
    <property type="nucleotide sequence ID" value="NM_001104841.1"/>
</dbReference>
<dbReference type="SMR" id="O73813"/>
<dbReference type="FunCoup" id="O73813">
    <property type="interactions" value="1576"/>
</dbReference>
<dbReference type="STRING" id="8090.ENSORLP00000009623"/>
<dbReference type="Ensembl" id="ENSORLT00000009624.2">
    <property type="protein sequence ID" value="ENSORLP00000009623.1"/>
    <property type="gene ID" value="ENSORLG00000007681.2"/>
</dbReference>
<dbReference type="Ensembl" id="ENSORLT00015033790.1">
    <property type="protein sequence ID" value="ENSORLP00015015184.1"/>
    <property type="gene ID" value="ENSORLG00015016098.1"/>
</dbReference>
<dbReference type="Ensembl" id="ENSORLT00020023440.1">
    <property type="protein sequence ID" value="ENSORLP00020031417.1"/>
    <property type="gene ID" value="ENSORLG00020016460.1"/>
</dbReference>
<dbReference type="GeneID" id="100049481"/>
<dbReference type="KEGG" id="ola:100049481"/>
<dbReference type="CTD" id="6189"/>
<dbReference type="eggNOG" id="KOG1628">
    <property type="taxonomic scope" value="Eukaryota"/>
</dbReference>
<dbReference type="GeneTree" id="ENSGT00390000018433"/>
<dbReference type="HOGENOM" id="CLU_062507_0_1_1"/>
<dbReference type="InParanoid" id="O73813"/>
<dbReference type="OMA" id="TRFKGHE"/>
<dbReference type="OrthoDB" id="9834376at2759"/>
<dbReference type="TreeFam" id="TF300037"/>
<dbReference type="Proteomes" id="UP000001038">
    <property type="component" value="Chromosome 1"/>
</dbReference>
<dbReference type="Proteomes" id="UP000265180">
    <property type="component" value="Chromosome 1"/>
</dbReference>
<dbReference type="Proteomes" id="UP000265200">
    <property type="component" value="Chromosome 1"/>
</dbReference>
<dbReference type="Bgee" id="ENSORLG00000007681">
    <property type="expression patterns" value="Expressed in pharyngeal gill and 14 other cell types or tissues"/>
</dbReference>
<dbReference type="GO" id="GO:0005829">
    <property type="term" value="C:cytosol"/>
    <property type="evidence" value="ECO:0000318"/>
    <property type="project" value="GO_Central"/>
</dbReference>
<dbReference type="GO" id="GO:0022627">
    <property type="term" value="C:cytosolic small ribosomal subunit"/>
    <property type="evidence" value="ECO:0007669"/>
    <property type="project" value="UniProtKB-UniRule"/>
</dbReference>
<dbReference type="GO" id="GO:0003735">
    <property type="term" value="F:structural constituent of ribosome"/>
    <property type="evidence" value="ECO:0007669"/>
    <property type="project" value="UniProtKB-UniRule"/>
</dbReference>
<dbReference type="GO" id="GO:0043009">
    <property type="term" value="P:chordate embryonic development"/>
    <property type="evidence" value="ECO:0007669"/>
    <property type="project" value="Ensembl"/>
</dbReference>
<dbReference type="GO" id="GO:0006412">
    <property type="term" value="P:translation"/>
    <property type="evidence" value="ECO:0007669"/>
    <property type="project" value="UniProtKB-UniRule"/>
</dbReference>
<dbReference type="HAMAP" id="MF_03122">
    <property type="entry name" value="Ribosomal_eS1_euk"/>
    <property type="match status" value="1"/>
</dbReference>
<dbReference type="InterPro" id="IPR001593">
    <property type="entry name" value="Ribosomal_eS1"/>
</dbReference>
<dbReference type="InterPro" id="IPR018281">
    <property type="entry name" value="Ribosomal_eS1_CS"/>
</dbReference>
<dbReference type="InterPro" id="IPR027500">
    <property type="entry name" value="Ribosomal_eS1_euk"/>
</dbReference>
<dbReference type="PANTHER" id="PTHR11830">
    <property type="entry name" value="40S RIBOSOMAL PROTEIN S3A"/>
    <property type="match status" value="1"/>
</dbReference>
<dbReference type="Pfam" id="PF01015">
    <property type="entry name" value="Ribosomal_S3Ae"/>
    <property type="match status" value="1"/>
</dbReference>
<dbReference type="SMART" id="SM01397">
    <property type="entry name" value="Ribosomal_S3Ae"/>
    <property type="match status" value="1"/>
</dbReference>
<dbReference type="PROSITE" id="PS01191">
    <property type="entry name" value="RIBOSOMAL_S3AE"/>
    <property type="match status" value="1"/>
</dbReference>
<name>RS3A_ORYLA</name>
<gene>
    <name type="primary">rps3a</name>
    <name type="synonym">fte-1</name>
</gene>
<keyword id="KW-0963">Cytoplasm</keyword>
<keyword id="KW-1185">Reference proteome</keyword>
<keyword id="KW-0687">Ribonucleoprotein</keyword>
<keyword id="KW-0689">Ribosomal protein</keyword>
<organism>
    <name type="scientific">Oryzias latipes</name>
    <name type="common">Japanese rice fish</name>
    <name type="synonym">Japanese killifish</name>
    <dbReference type="NCBI Taxonomy" id="8090"/>
    <lineage>
        <taxon>Eukaryota</taxon>
        <taxon>Metazoa</taxon>
        <taxon>Chordata</taxon>
        <taxon>Craniata</taxon>
        <taxon>Vertebrata</taxon>
        <taxon>Euteleostomi</taxon>
        <taxon>Actinopterygii</taxon>
        <taxon>Neopterygii</taxon>
        <taxon>Teleostei</taxon>
        <taxon>Neoteleostei</taxon>
        <taxon>Acanthomorphata</taxon>
        <taxon>Ovalentaria</taxon>
        <taxon>Atherinomorphae</taxon>
        <taxon>Beloniformes</taxon>
        <taxon>Adrianichthyidae</taxon>
        <taxon>Oryziinae</taxon>
        <taxon>Oryzias</taxon>
    </lineage>
</organism>
<sequence>MAVGKNKRLTKGGKKGAKKKIVDPFSKKDWYDVKAPAMFNIRNLGKTLVTRTQGTKIASDGLKGRVFEVSLADLQNDEVAFRKFKLITEDVQGKNCLTNFHGMDLTRDKMCSMVKKWQTMIEAHVDVKTTDGYLLRLFCVGFTKKRNNQVRKTSYAQHQQVRQIRKKMMEIMTREVQTNDLKEVVNKLIPDSVGKDIEKACQSIYPLHDVYVRKVKMLKKPKFELGKLMELHGEGGAGGAAKASGDDTGAKVERADGYEPPIQETV</sequence>
<comment type="function">
    <text evidence="1">Component of the small ribosomal subunit. The ribosome is a large ribonucleoprotein complex responsible for the synthesis of proteins in the cell.</text>
</comment>
<comment type="subunit">
    <text evidence="2">Component of the small ribosomal subunit. Mature ribosomes consist of a small (40S) and a large (60S) subunit. The 40S subunit contains about 33 different proteins and 1 molecule of RNA (18S). The 60S subunit contains about 49 different proteins and 3 molecules of RNA (28S, 5.8S and 5S).</text>
</comment>
<comment type="subcellular location">
    <subcellularLocation>
        <location evidence="2">Cytoplasm</location>
    </subcellularLocation>
</comment>
<comment type="similarity">
    <text evidence="2">Belongs to the eukaryotic ribosomal protein eS1 family.</text>
</comment>
<proteinExistence type="evidence at transcript level"/>
<reference key="1">
    <citation type="journal article" date="2000" name="Gene">
        <title>Isolation and characterization of medaka ribosomal protein S3a (fte-1) cDNA and gene.</title>
        <authorList>
            <person name="Shemer R."/>
            <person name="Eibschitz I."/>
            <person name="Cavari B."/>
        </authorList>
    </citation>
    <scope>NUCLEOTIDE SEQUENCE [MRNA]</scope>
</reference>
<accession>O73813</accession>